<keyword id="KW-0010">Activator</keyword>
<keyword id="KW-0217">Developmental protein</keyword>
<keyword id="KW-0221">Differentiation</keyword>
<keyword id="KW-0238">DNA-binding</keyword>
<keyword id="KW-0287">Flowering</keyword>
<keyword id="KW-0539">Nucleus</keyword>
<keyword id="KW-1185">Reference proteome</keyword>
<keyword id="KW-0804">Transcription</keyword>
<keyword id="KW-0805">Transcription regulation</keyword>
<reference key="1">
    <citation type="journal article" date="2005" name="PLoS Biol.">
        <title>The genomes of Oryza sativa: a history of duplications.</title>
        <authorList>
            <person name="Yu J."/>
            <person name="Wang J."/>
            <person name="Lin W."/>
            <person name="Li S."/>
            <person name="Li H."/>
            <person name="Zhou J."/>
            <person name="Ni P."/>
            <person name="Dong W."/>
            <person name="Hu S."/>
            <person name="Zeng C."/>
            <person name="Zhang J."/>
            <person name="Zhang Y."/>
            <person name="Li R."/>
            <person name="Xu Z."/>
            <person name="Li S."/>
            <person name="Li X."/>
            <person name="Zheng H."/>
            <person name="Cong L."/>
            <person name="Lin L."/>
            <person name="Yin J."/>
            <person name="Geng J."/>
            <person name="Li G."/>
            <person name="Shi J."/>
            <person name="Liu J."/>
            <person name="Lv H."/>
            <person name="Li J."/>
            <person name="Wang J."/>
            <person name="Deng Y."/>
            <person name="Ran L."/>
            <person name="Shi X."/>
            <person name="Wang X."/>
            <person name="Wu Q."/>
            <person name="Li C."/>
            <person name="Ren X."/>
            <person name="Wang J."/>
            <person name="Wang X."/>
            <person name="Li D."/>
            <person name="Liu D."/>
            <person name="Zhang X."/>
            <person name="Ji Z."/>
            <person name="Zhao W."/>
            <person name="Sun Y."/>
            <person name="Zhang Z."/>
            <person name="Bao J."/>
            <person name="Han Y."/>
            <person name="Dong L."/>
            <person name="Ji J."/>
            <person name="Chen P."/>
            <person name="Wu S."/>
            <person name="Liu J."/>
            <person name="Xiao Y."/>
            <person name="Bu D."/>
            <person name="Tan J."/>
            <person name="Yang L."/>
            <person name="Ye C."/>
            <person name="Zhang J."/>
            <person name="Xu J."/>
            <person name="Zhou Y."/>
            <person name="Yu Y."/>
            <person name="Zhang B."/>
            <person name="Zhuang S."/>
            <person name="Wei H."/>
            <person name="Liu B."/>
            <person name="Lei M."/>
            <person name="Yu H."/>
            <person name="Li Y."/>
            <person name="Xu H."/>
            <person name="Wei S."/>
            <person name="He X."/>
            <person name="Fang L."/>
            <person name="Zhang Z."/>
            <person name="Zhang Y."/>
            <person name="Huang X."/>
            <person name="Su Z."/>
            <person name="Tong W."/>
            <person name="Li J."/>
            <person name="Tong Z."/>
            <person name="Li S."/>
            <person name="Ye J."/>
            <person name="Wang L."/>
            <person name="Fang L."/>
            <person name="Lei T."/>
            <person name="Chen C.-S."/>
            <person name="Chen H.-C."/>
            <person name="Xu Z."/>
            <person name="Li H."/>
            <person name="Huang H."/>
            <person name="Zhang F."/>
            <person name="Xu H."/>
            <person name="Li N."/>
            <person name="Zhao C."/>
            <person name="Li S."/>
            <person name="Dong L."/>
            <person name="Huang Y."/>
            <person name="Li L."/>
            <person name="Xi Y."/>
            <person name="Qi Q."/>
            <person name="Li W."/>
            <person name="Zhang B."/>
            <person name="Hu W."/>
            <person name="Zhang Y."/>
            <person name="Tian X."/>
            <person name="Jiao Y."/>
            <person name="Liang X."/>
            <person name="Jin J."/>
            <person name="Gao L."/>
            <person name="Zheng W."/>
            <person name="Hao B."/>
            <person name="Liu S.-M."/>
            <person name="Wang W."/>
            <person name="Yuan L."/>
            <person name="Cao M."/>
            <person name="McDermott J."/>
            <person name="Samudrala R."/>
            <person name="Wang J."/>
            <person name="Wong G.K.-S."/>
            <person name="Yang H."/>
        </authorList>
    </citation>
    <scope>NUCLEOTIDE SEQUENCE [LARGE SCALE GENOMIC DNA]</scope>
    <source>
        <strain>cv. 93-11</strain>
    </source>
</reference>
<reference key="2">
    <citation type="journal article" date="2005" name="Plant J.">
        <title>OsMADS1, a rice MADS-box factor, controls differentiation of specific cell types in the lemma and palea and is an early-acting regulator of inner floral organs.</title>
        <authorList>
            <person name="Prasad K."/>
            <person name="Parameswaran S."/>
            <person name="Vijayraghavan U."/>
        </authorList>
    </citation>
    <scope>NUCLEOTIDE SEQUENCE [GENOMIC DNA] OF 1-61</scope>
    <scope>FUNCTION</scope>
    <scope>DEVELOPMENTAL STAGE</scope>
    <scope>DISRUPTION PHENOTYPE</scope>
</reference>
<organism>
    <name type="scientific">Oryza sativa subsp. indica</name>
    <name type="common">Rice</name>
    <dbReference type="NCBI Taxonomy" id="39946"/>
    <lineage>
        <taxon>Eukaryota</taxon>
        <taxon>Viridiplantae</taxon>
        <taxon>Streptophyta</taxon>
        <taxon>Embryophyta</taxon>
        <taxon>Tracheophyta</taxon>
        <taxon>Spermatophyta</taxon>
        <taxon>Magnoliopsida</taxon>
        <taxon>Liliopsida</taxon>
        <taxon>Poales</taxon>
        <taxon>Poaceae</taxon>
        <taxon>BOP clade</taxon>
        <taxon>Oryzoideae</taxon>
        <taxon>Oryzeae</taxon>
        <taxon>Oryzinae</taxon>
        <taxon>Oryza</taxon>
        <taxon>Oryza sativa</taxon>
    </lineage>
</organism>
<name>MADS1_ORYSI</name>
<accession>A2XDY1</accession>
<accession>B8AQT4</accession>
<accession>Q3ZES6</accession>
<accession>Q40700</accession>
<protein>
    <recommendedName>
        <fullName>MADS-box transcription factor 1</fullName>
    </recommendedName>
    <alternativeName>
        <fullName>OsMADS1</fullName>
    </alternativeName>
    <alternativeName>
        <fullName>Protein LEAFY HULL STERILE 1</fullName>
    </alternativeName>
    <alternativeName>
        <fullName>Protein SEPALLATA-like</fullName>
    </alternativeName>
</protein>
<gene>
    <name type="primary">MADS1</name>
    <name type="synonym">LHS1</name>
    <name type="ORF">OsI_10526</name>
</gene>
<feature type="chain" id="PRO_0000296346" description="MADS-box transcription factor 1">
    <location>
        <begin position="1"/>
        <end position="257"/>
    </location>
</feature>
<feature type="domain" description="MADS-box" evidence="2">
    <location>
        <begin position="1"/>
        <end position="61"/>
    </location>
</feature>
<feature type="domain" description="K-box" evidence="3">
    <location>
        <begin position="85"/>
        <end position="175"/>
    </location>
</feature>
<dbReference type="EMBL" id="CM000128">
    <property type="protein sequence ID" value="EEC74760.1"/>
    <property type="molecule type" value="Genomic_DNA"/>
</dbReference>
<dbReference type="EMBL" id="AY895163">
    <property type="protein sequence ID" value="AAX82498.1"/>
    <property type="molecule type" value="Genomic_DNA"/>
</dbReference>
<dbReference type="SMR" id="A2XDY1"/>
<dbReference type="STRING" id="39946.A2XDY1"/>
<dbReference type="EnsemblPlants" id="BGIOSGA011213-TA">
    <property type="protein sequence ID" value="BGIOSGA011213-PA"/>
    <property type="gene ID" value="BGIOSGA011213"/>
</dbReference>
<dbReference type="EnsemblPlants" id="OsGoSa_03g0008440.01">
    <property type="protein sequence ID" value="OsGoSa_03g0008440.01"/>
    <property type="gene ID" value="OsGoSa_03g0008440"/>
</dbReference>
<dbReference type="EnsemblPlants" id="OsIR64_03g0008360.01">
    <property type="protein sequence ID" value="OsIR64_03g0008360.01"/>
    <property type="gene ID" value="OsIR64_03g0008360"/>
</dbReference>
<dbReference type="EnsemblPlants" id="OsKYG_03g0008470.01">
    <property type="protein sequence ID" value="OsKYG_03g0008470.01"/>
    <property type="gene ID" value="OsKYG_03g0008470"/>
</dbReference>
<dbReference type="EnsemblPlants" id="OsLaMu_03g0008420.01">
    <property type="protein sequence ID" value="OsLaMu_03g0008420.01"/>
    <property type="gene ID" value="OsLaMu_03g0008420"/>
</dbReference>
<dbReference type="EnsemblPlants" id="OsLima_03g0008410.01">
    <property type="protein sequence ID" value="OsLima_03g0008410.01"/>
    <property type="gene ID" value="OsLima_03g0008410"/>
</dbReference>
<dbReference type="EnsemblPlants" id="OsLiXu_03g0008450.01">
    <property type="protein sequence ID" value="OsLiXu_03g0008450.01"/>
    <property type="gene ID" value="OsLiXu_03g0008450"/>
</dbReference>
<dbReference type="EnsemblPlants" id="OsMH63_03G008370_01">
    <property type="protein sequence ID" value="OsMH63_03G008370_01"/>
    <property type="gene ID" value="OsMH63_03G008370"/>
</dbReference>
<dbReference type="EnsemblPlants" id="OsPr106_03g0008430.01">
    <property type="protein sequence ID" value="OsPr106_03g0008430.01"/>
    <property type="gene ID" value="OsPr106_03g0008430"/>
</dbReference>
<dbReference type="EnsemblPlants" id="OsZS97_03G008260_01">
    <property type="protein sequence ID" value="OsZS97_03G008260_01"/>
    <property type="gene ID" value="OsZS97_03G008260"/>
</dbReference>
<dbReference type="Gramene" id="BGIOSGA011213-TA">
    <property type="protein sequence ID" value="BGIOSGA011213-PA"/>
    <property type="gene ID" value="BGIOSGA011213"/>
</dbReference>
<dbReference type="Gramene" id="OsGoSa_03g0008440.01">
    <property type="protein sequence ID" value="OsGoSa_03g0008440.01"/>
    <property type="gene ID" value="OsGoSa_03g0008440"/>
</dbReference>
<dbReference type="Gramene" id="OsIR64_03g0008360.01">
    <property type="protein sequence ID" value="OsIR64_03g0008360.01"/>
    <property type="gene ID" value="OsIR64_03g0008360"/>
</dbReference>
<dbReference type="Gramene" id="OsKYG_03g0008470.01">
    <property type="protein sequence ID" value="OsKYG_03g0008470.01"/>
    <property type="gene ID" value="OsKYG_03g0008470"/>
</dbReference>
<dbReference type="Gramene" id="OsLaMu_03g0008420.01">
    <property type="protein sequence ID" value="OsLaMu_03g0008420.01"/>
    <property type="gene ID" value="OsLaMu_03g0008420"/>
</dbReference>
<dbReference type="Gramene" id="OsLima_03g0008410.01">
    <property type="protein sequence ID" value="OsLima_03g0008410.01"/>
    <property type="gene ID" value="OsLima_03g0008410"/>
</dbReference>
<dbReference type="Gramene" id="OsLiXu_03g0008450.01">
    <property type="protein sequence ID" value="OsLiXu_03g0008450.01"/>
    <property type="gene ID" value="OsLiXu_03g0008450"/>
</dbReference>
<dbReference type="Gramene" id="OsMH63_03G008370_01">
    <property type="protein sequence ID" value="OsMH63_03G008370_01"/>
    <property type="gene ID" value="OsMH63_03G008370"/>
</dbReference>
<dbReference type="Gramene" id="OsPr106_03g0008430.01">
    <property type="protein sequence ID" value="OsPr106_03g0008430.01"/>
    <property type="gene ID" value="OsPr106_03g0008430"/>
</dbReference>
<dbReference type="Gramene" id="OsZS97_03G008260_01">
    <property type="protein sequence ID" value="OsZS97_03G008260_01"/>
    <property type="gene ID" value="OsZS97_03G008260"/>
</dbReference>
<dbReference type="HOGENOM" id="CLU_053053_0_2_1"/>
<dbReference type="OMA" id="GFFPGWT"/>
<dbReference type="OrthoDB" id="1898716at2759"/>
<dbReference type="Proteomes" id="UP000007015">
    <property type="component" value="Chromosome 3"/>
</dbReference>
<dbReference type="GO" id="GO:0005634">
    <property type="term" value="C:nucleus"/>
    <property type="evidence" value="ECO:0007669"/>
    <property type="project" value="UniProtKB-SubCell"/>
</dbReference>
<dbReference type="GO" id="GO:0003700">
    <property type="term" value="F:DNA-binding transcription factor activity"/>
    <property type="evidence" value="ECO:0007669"/>
    <property type="project" value="InterPro"/>
</dbReference>
<dbReference type="GO" id="GO:0046983">
    <property type="term" value="F:protein dimerization activity"/>
    <property type="evidence" value="ECO:0007669"/>
    <property type="project" value="InterPro"/>
</dbReference>
<dbReference type="GO" id="GO:0000977">
    <property type="term" value="F:RNA polymerase II transcription regulatory region sequence-specific DNA binding"/>
    <property type="evidence" value="ECO:0007669"/>
    <property type="project" value="InterPro"/>
</dbReference>
<dbReference type="GO" id="GO:0030154">
    <property type="term" value="P:cell differentiation"/>
    <property type="evidence" value="ECO:0007669"/>
    <property type="project" value="UniProtKB-KW"/>
</dbReference>
<dbReference type="GO" id="GO:0010022">
    <property type="term" value="P:meristem determinacy"/>
    <property type="evidence" value="ECO:0007669"/>
    <property type="project" value="EnsemblPlants"/>
</dbReference>
<dbReference type="GO" id="GO:0045944">
    <property type="term" value="P:positive regulation of transcription by RNA polymerase II"/>
    <property type="evidence" value="ECO:0007669"/>
    <property type="project" value="InterPro"/>
</dbReference>
<dbReference type="GO" id="GO:0048509">
    <property type="term" value="P:regulation of meristem development"/>
    <property type="evidence" value="ECO:0007669"/>
    <property type="project" value="EnsemblPlants"/>
</dbReference>
<dbReference type="GO" id="GO:0010093">
    <property type="term" value="P:specification of floral organ identity"/>
    <property type="evidence" value="ECO:0007669"/>
    <property type="project" value="EnsemblPlants"/>
</dbReference>
<dbReference type="CDD" id="cd00265">
    <property type="entry name" value="MADS_MEF2_like"/>
    <property type="match status" value="1"/>
</dbReference>
<dbReference type="FunFam" id="3.40.1810.10:FF:000008">
    <property type="entry name" value="MADS-box transcription factor 1"/>
    <property type="match status" value="1"/>
</dbReference>
<dbReference type="Gene3D" id="3.40.1810.10">
    <property type="entry name" value="Transcription factor, MADS-box"/>
    <property type="match status" value="1"/>
</dbReference>
<dbReference type="InterPro" id="IPR050142">
    <property type="entry name" value="MADS-box/MEF2_TF"/>
</dbReference>
<dbReference type="InterPro" id="IPR033896">
    <property type="entry name" value="MEF2-like_N"/>
</dbReference>
<dbReference type="InterPro" id="IPR002487">
    <property type="entry name" value="TF_Kbox"/>
</dbReference>
<dbReference type="InterPro" id="IPR002100">
    <property type="entry name" value="TF_MADSbox"/>
</dbReference>
<dbReference type="InterPro" id="IPR036879">
    <property type="entry name" value="TF_MADSbox_sf"/>
</dbReference>
<dbReference type="PANTHER" id="PTHR48019">
    <property type="entry name" value="SERUM RESPONSE FACTOR HOMOLOG"/>
    <property type="match status" value="1"/>
</dbReference>
<dbReference type="Pfam" id="PF01486">
    <property type="entry name" value="K-box"/>
    <property type="match status" value="1"/>
</dbReference>
<dbReference type="Pfam" id="PF00319">
    <property type="entry name" value="SRF-TF"/>
    <property type="match status" value="1"/>
</dbReference>
<dbReference type="PRINTS" id="PR00404">
    <property type="entry name" value="MADSDOMAIN"/>
</dbReference>
<dbReference type="SMART" id="SM00432">
    <property type="entry name" value="MADS"/>
    <property type="match status" value="1"/>
</dbReference>
<dbReference type="SUPFAM" id="SSF55455">
    <property type="entry name" value="SRF-like"/>
    <property type="match status" value="1"/>
</dbReference>
<dbReference type="PROSITE" id="PS51297">
    <property type="entry name" value="K_BOX"/>
    <property type="match status" value="1"/>
</dbReference>
<dbReference type="PROSITE" id="PS00350">
    <property type="entry name" value="MADS_BOX_1"/>
    <property type="match status" value="1"/>
</dbReference>
<dbReference type="PROSITE" id="PS50066">
    <property type="entry name" value="MADS_BOX_2"/>
    <property type="match status" value="1"/>
</dbReference>
<evidence type="ECO:0000250" key="1"/>
<evidence type="ECO:0000255" key="2">
    <source>
        <dbReference type="PROSITE-ProRule" id="PRU00251"/>
    </source>
</evidence>
<evidence type="ECO:0000255" key="3">
    <source>
        <dbReference type="PROSITE-ProRule" id="PRU00629"/>
    </source>
</evidence>
<evidence type="ECO:0000269" key="4">
    <source>
    </source>
</evidence>
<evidence type="ECO:0000305" key="5"/>
<sequence>MGRGKVELKRIENKISRQVTFAKRRNGLLKKAYELSLLCDAEVALIIFSGRGRLFEFSSSSCMYKTLERYRSCNYNSQDAAAPENEINYQEYLKLKTRVEFLQTTQRNILGEDLGPLSMKELEQLENQIEVSLKQIRSRKNQALLDQLFDLKSKEQQLQDLNKDLRKKLQETSAENVLHMSWQDGGGHSGSSTVLADQPHHHQGLLHPHPDQGDHSLQIGYHHPHAHHHQAYMDHLSNEAADMVAHHPNEHIPSGWI</sequence>
<proteinExistence type="evidence at transcript level"/>
<comment type="function">
    <text evidence="4">Probable transcription factor involved in the development of floral organs. Required for the formation of inner floral organs (lodicules, stamens and carpels, or whorls 2, 3 and 4) and the lemma and palea (whorl 1), which are grass floral organs analogous to sepals. May be involved in the control of flowering time. Seems to act as transcriptional activator. May act upstream of the auxin-responsive protein GH3.8.</text>
</comment>
<comment type="subunit">
    <text evidence="1">May interact with the K-box of MADS6, MADS14 and MADS15.</text>
</comment>
<comment type="subcellular location">
    <subcellularLocation>
        <location evidence="5">Nucleus</location>
    </subcellularLocation>
</comment>
<comment type="developmental stage">
    <text evidence="4">Expressed at early stage of flower development in floral meristem, and at later stage in lemma, palea and carpel primordia.</text>
</comment>
<comment type="disruption phenotype">
    <text evidence="4">Homeotic transformation of lodicules, stamens and carpels into lemma- and palea-like structures.</text>
</comment>